<dbReference type="EC" id="7.1.1.-" evidence="1"/>
<dbReference type="EMBL" id="CP000774">
    <property type="protein sequence ID" value="ABS64825.1"/>
    <property type="molecule type" value="Genomic_DNA"/>
</dbReference>
<dbReference type="RefSeq" id="WP_012112153.1">
    <property type="nucleotide sequence ID" value="NC_009719.1"/>
</dbReference>
<dbReference type="SMR" id="A7HY42"/>
<dbReference type="STRING" id="402881.Plav_3219"/>
<dbReference type="KEGG" id="pla:Plav_3219"/>
<dbReference type="eggNOG" id="COG1005">
    <property type="taxonomic scope" value="Bacteria"/>
</dbReference>
<dbReference type="HOGENOM" id="CLU_015134_0_1_5"/>
<dbReference type="OrthoDB" id="9803734at2"/>
<dbReference type="Proteomes" id="UP000006377">
    <property type="component" value="Chromosome"/>
</dbReference>
<dbReference type="GO" id="GO:0005886">
    <property type="term" value="C:plasma membrane"/>
    <property type="evidence" value="ECO:0007669"/>
    <property type="project" value="UniProtKB-SubCell"/>
</dbReference>
<dbReference type="GO" id="GO:0003954">
    <property type="term" value="F:NADH dehydrogenase activity"/>
    <property type="evidence" value="ECO:0007669"/>
    <property type="project" value="TreeGrafter"/>
</dbReference>
<dbReference type="GO" id="GO:0016655">
    <property type="term" value="F:oxidoreductase activity, acting on NAD(P)H, quinone or similar compound as acceptor"/>
    <property type="evidence" value="ECO:0007669"/>
    <property type="project" value="UniProtKB-UniRule"/>
</dbReference>
<dbReference type="GO" id="GO:0048038">
    <property type="term" value="F:quinone binding"/>
    <property type="evidence" value="ECO:0007669"/>
    <property type="project" value="UniProtKB-KW"/>
</dbReference>
<dbReference type="GO" id="GO:0009060">
    <property type="term" value="P:aerobic respiration"/>
    <property type="evidence" value="ECO:0007669"/>
    <property type="project" value="TreeGrafter"/>
</dbReference>
<dbReference type="HAMAP" id="MF_01350">
    <property type="entry name" value="NDH1_NuoH"/>
    <property type="match status" value="1"/>
</dbReference>
<dbReference type="InterPro" id="IPR001694">
    <property type="entry name" value="NADH_UbQ_OxRdtase_su1/FPO"/>
</dbReference>
<dbReference type="InterPro" id="IPR018086">
    <property type="entry name" value="NADH_UbQ_OxRdtase_su1_CS"/>
</dbReference>
<dbReference type="NCBIfam" id="NF004741">
    <property type="entry name" value="PRK06076.1-2"/>
    <property type="match status" value="1"/>
</dbReference>
<dbReference type="NCBIfam" id="NF004745">
    <property type="entry name" value="PRK06076.1-6"/>
    <property type="match status" value="1"/>
</dbReference>
<dbReference type="PANTHER" id="PTHR11432">
    <property type="entry name" value="NADH DEHYDROGENASE SUBUNIT 1"/>
    <property type="match status" value="1"/>
</dbReference>
<dbReference type="PANTHER" id="PTHR11432:SF3">
    <property type="entry name" value="NADH-UBIQUINONE OXIDOREDUCTASE CHAIN 1"/>
    <property type="match status" value="1"/>
</dbReference>
<dbReference type="Pfam" id="PF00146">
    <property type="entry name" value="NADHdh"/>
    <property type="match status" value="1"/>
</dbReference>
<dbReference type="PROSITE" id="PS00668">
    <property type="entry name" value="COMPLEX1_ND1_2"/>
    <property type="match status" value="1"/>
</dbReference>
<organism>
    <name type="scientific">Parvibaculum lavamentivorans (strain DS-1 / DSM 13023 / NCIMB 13966)</name>
    <dbReference type="NCBI Taxonomy" id="402881"/>
    <lineage>
        <taxon>Bacteria</taxon>
        <taxon>Pseudomonadati</taxon>
        <taxon>Pseudomonadota</taxon>
        <taxon>Alphaproteobacteria</taxon>
        <taxon>Hyphomicrobiales</taxon>
        <taxon>Parvibaculaceae</taxon>
        <taxon>Parvibaculum</taxon>
    </lineage>
</organism>
<gene>
    <name evidence="1" type="primary">nuoH</name>
    <name type="ordered locus">Plav_3219</name>
</gene>
<feature type="chain" id="PRO_1000073374" description="NADH-quinone oxidoreductase subunit H">
    <location>
        <begin position="1"/>
        <end position="337"/>
    </location>
</feature>
<feature type="transmembrane region" description="Helical" evidence="1">
    <location>
        <begin position="9"/>
        <end position="29"/>
    </location>
</feature>
<feature type="transmembrane region" description="Helical" evidence="1">
    <location>
        <begin position="50"/>
        <end position="70"/>
    </location>
</feature>
<feature type="transmembrane region" description="Helical" evidence="1">
    <location>
        <begin position="82"/>
        <end position="102"/>
    </location>
</feature>
<feature type="transmembrane region" description="Helical" evidence="1">
    <location>
        <begin position="115"/>
        <end position="135"/>
    </location>
</feature>
<feature type="transmembrane region" description="Helical" evidence="1">
    <location>
        <begin position="161"/>
        <end position="181"/>
    </location>
</feature>
<feature type="transmembrane region" description="Helical" evidence="1">
    <location>
        <begin position="186"/>
        <end position="206"/>
    </location>
</feature>
<feature type="transmembrane region" description="Helical" evidence="1">
    <location>
        <begin position="245"/>
        <end position="265"/>
    </location>
</feature>
<feature type="transmembrane region" description="Helical" evidence="1">
    <location>
        <begin position="273"/>
        <end position="293"/>
    </location>
</feature>
<feature type="transmembrane region" description="Helical" evidence="1">
    <location>
        <begin position="313"/>
        <end position="333"/>
    </location>
</feature>
<comment type="function">
    <text evidence="1">NDH-1 shuttles electrons from NADH, via FMN and iron-sulfur (Fe-S) centers, to quinones in the respiratory chain. The immediate electron acceptor for the enzyme in this species is believed to be ubiquinone. Couples the redox reaction to proton translocation (for every two electrons transferred, four hydrogen ions are translocated across the cytoplasmic membrane), and thus conserves the redox energy in a proton gradient. This subunit may bind ubiquinone.</text>
</comment>
<comment type="catalytic activity">
    <reaction evidence="1">
        <text>a quinone + NADH + 5 H(+)(in) = a quinol + NAD(+) + 4 H(+)(out)</text>
        <dbReference type="Rhea" id="RHEA:57888"/>
        <dbReference type="ChEBI" id="CHEBI:15378"/>
        <dbReference type="ChEBI" id="CHEBI:24646"/>
        <dbReference type="ChEBI" id="CHEBI:57540"/>
        <dbReference type="ChEBI" id="CHEBI:57945"/>
        <dbReference type="ChEBI" id="CHEBI:132124"/>
    </reaction>
</comment>
<comment type="subunit">
    <text evidence="1">NDH-1 is composed of 14 different subunits. Subunits NuoA, H, J, K, L, M, N constitute the membrane sector of the complex.</text>
</comment>
<comment type="subcellular location">
    <subcellularLocation>
        <location evidence="1">Cell inner membrane</location>
        <topology evidence="1">Multi-pass membrane protein</topology>
    </subcellularLocation>
</comment>
<comment type="similarity">
    <text evidence="1">Belongs to the complex I subunit 1 family.</text>
</comment>
<protein>
    <recommendedName>
        <fullName evidence="1">NADH-quinone oxidoreductase subunit H</fullName>
        <ecNumber evidence="1">7.1.1.-</ecNumber>
    </recommendedName>
    <alternativeName>
        <fullName evidence="1">NADH dehydrogenase I subunit H</fullName>
    </alternativeName>
    <alternativeName>
        <fullName evidence="1">NDH-1 subunit H</fullName>
    </alternativeName>
</protein>
<evidence type="ECO:0000255" key="1">
    <source>
        <dbReference type="HAMAP-Rule" id="MF_01350"/>
    </source>
</evidence>
<reference key="1">
    <citation type="journal article" date="2011" name="Stand. Genomic Sci.">
        <title>Complete genome sequence of Parvibaculum lavamentivorans type strain (DS-1(T)).</title>
        <authorList>
            <person name="Schleheck D."/>
            <person name="Weiss M."/>
            <person name="Pitluck S."/>
            <person name="Bruce D."/>
            <person name="Land M.L."/>
            <person name="Han S."/>
            <person name="Saunders E."/>
            <person name="Tapia R."/>
            <person name="Detter C."/>
            <person name="Brettin T."/>
            <person name="Han J."/>
            <person name="Woyke T."/>
            <person name="Goodwin L."/>
            <person name="Pennacchio L."/>
            <person name="Nolan M."/>
            <person name="Cook A.M."/>
            <person name="Kjelleberg S."/>
            <person name="Thomas T."/>
        </authorList>
    </citation>
    <scope>NUCLEOTIDE SEQUENCE [LARGE SCALE GENOMIC DNA]</scope>
    <source>
        <strain>DS-1 / DSM 13023 / NCIMB 13966</strain>
    </source>
</reference>
<proteinExistence type="inferred from homology"/>
<sequence length="337" mass="37120">MTDVLIAYGIPLAIIAAQSLALIVALLLVTAYVLLADRKIWAAVQLRRGPNVVGAFGLLQSFADLLKFVFKEIVIPAGANKGIFLLAPLVTVVLALSGWAVIPLDARMVIADINVGILYIFAISSLGVYGVIMAGWASNSKYPFLSALRAAAQMVSYEVSIGFVIVCVLMTAGSLNLTAIVESQRTIWYFIPHLPMFVIFFISALAETNRPPFDLAEAESELVAGFMVEYSSTAYMMFMLGEYVSILLMCAMTTILFLGGWLPPIDIAPFNMVPGVIWFLLKVFLVFFMFAMVKAFVPRYRYDQLMRLGWKVFLPISLFWVVLTAGVLVGFDIVPQH</sequence>
<name>NUOH_PARL1</name>
<accession>A7HY42</accession>
<keyword id="KW-0997">Cell inner membrane</keyword>
<keyword id="KW-1003">Cell membrane</keyword>
<keyword id="KW-0472">Membrane</keyword>
<keyword id="KW-0520">NAD</keyword>
<keyword id="KW-0874">Quinone</keyword>
<keyword id="KW-1185">Reference proteome</keyword>
<keyword id="KW-1278">Translocase</keyword>
<keyword id="KW-0812">Transmembrane</keyword>
<keyword id="KW-1133">Transmembrane helix</keyword>
<keyword id="KW-0830">Ubiquinone</keyword>